<dbReference type="EMBL" id="CP001055">
    <property type="protein sequence ID" value="ACC98816.1"/>
    <property type="molecule type" value="Genomic_DNA"/>
</dbReference>
<dbReference type="RefSeq" id="WP_012415431.1">
    <property type="nucleotide sequence ID" value="NC_010644.1"/>
</dbReference>
<dbReference type="SMR" id="B2KE70"/>
<dbReference type="STRING" id="445932.Emin_1266"/>
<dbReference type="KEGG" id="emi:Emin_1266"/>
<dbReference type="HOGENOM" id="CLU_129938_2_0_0"/>
<dbReference type="OrthoDB" id="9804164at2"/>
<dbReference type="Proteomes" id="UP000001029">
    <property type="component" value="Chromosome"/>
</dbReference>
<dbReference type="GO" id="GO:1990904">
    <property type="term" value="C:ribonucleoprotein complex"/>
    <property type="evidence" value="ECO:0007669"/>
    <property type="project" value="UniProtKB-KW"/>
</dbReference>
<dbReference type="GO" id="GO:0005840">
    <property type="term" value="C:ribosome"/>
    <property type="evidence" value="ECO:0007669"/>
    <property type="project" value="UniProtKB-KW"/>
</dbReference>
<dbReference type="GO" id="GO:0003735">
    <property type="term" value="F:structural constituent of ribosome"/>
    <property type="evidence" value="ECO:0007669"/>
    <property type="project" value="InterPro"/>
</dbReference>
<dbReference type="GO" id="GO:0006412">
    <property type="term" value="P:translation"/>
    <property type="evidence" value="ECO:0007669"/>
    <property type="project" value="UniProtKB-UniRule"/>
</dbReference>
<dbReference type="FunFam" id="1.10.287.3980:FF:000001">
    <property type="entry name" value="Mitochondrial ribosomal protein L34"/>
    <property type="match status" value="1"/>
</dbReference>
<dbReference type="Gene3D" id="1.10.287.3980">
    <property type="match status" value="1"/>
</dbReference>
<dbReference type="HAMAP" id="MF_00391">
    <property type="entry name" value="Ribosomal_bL34"/>
    <property type="match status" value="1"/>
</dbReference>
<dbReference type="InterPro" id="IPR000271">
    <property type="entry name" value="Ribosomal_bL34"/>
</dbReference>
<dbReference type="NCBIfam" id="TIGR01030">
    <property type="entry name" value="rpmH_bact"/>
    <property type="match status" value="1"/>
</dbReference>
<dbReference type="PANTHER" id="PTHR14503:SF4">
    <property type="entry name" value="LARGE RIBOSOMAL SUBUNIT PROTEIN BL34M"/>
    <property type="match status" value="1"/>
</dbReference>
<dbReference type="PANTHER" id="PTHR14503">
    <property type="entry name" value="MITOCHONDRIAL RIBOSOMAL PROTEIN 34 FAMILY MEMBER"/>
    <property type="match status" value="1"/>
</dbReference>
<dbReference type="Pfam" id="PF00468">
    <property type="entry name" value="Ribosomal_L34"/>
    <property type="match status" value="1"/>
</dbReference>
<reference key="1">
    <citation type="journal article" date="2009" name="Appl. Environ. Microbiol.">
        <title>Genomic analysis of 'Elusimicrobium minutum,' the first cultivated representative of the phylum 'Elusimicrobia' (formerly termite group 1).</title>
        <authorList>
            <person name="Herlemann D.P.R."/>
            <person name="Geissinger O."/>
            <person name="Ikeda-Ohtsubo W."/>
            <person name="Kunin V."/>
            <person name="Sun H."/>
            <person name="Lapidus A."/>
            <person name="Hugenholtz P."/>
            <person name="Brune A."/>
        </authorList>
    </citation>
    <scope>NUCLEOTIDE SEQUENCE [LARGE SCALE GENOMIC DNA]</scope>
    <source>
        <strain>Pei191</strain>
    </source>
</reference>
<name>RL34_ELUMP</name>
<accession>B2KE70</accession>
<proteinExistence type="inferred from homology"/>
<sequence>MLPTYRPNKRRRAKSIGFRARMETPGGKKVLSARRAKGRKNLIAK</sequence>
<feature type="chain" id="PRO_1000196040" description="Large ribosomal subunit protein bL34">
    <location>
        <begin position="1"/>
        <end position="45"/>
    </location>
</feature>
<feature type="region of interest" description="Disordered" evidence="2">
    <location>
        <begin position="23"/>
        <end position="45"/>
    </location>
</feature>
<feature type="compositionally biased region" description="Basic residues" evidence="2">
    <location>
        <begin position="31"/>
        <end position="45"/>
    </location>
</feature>
<evidence type="ECO:0000255" key="1">
    <source>
        <dbReference type="HAMAP-Rule" id="MF_00391"/>
    </source>
</evidence>
<evidence type="ECO:0000256" key="2">
    <source>
        <dbReference type="SAM" id="MobiDB-lite"/>
    </source>
</evidence>
<evidence type="ECO:0000305" key="3"/>
<protein>
    <recommendedName>
        <fullName evidence="1">Large ribosomal subunit protein bL34</fullName>
    </recommendedName>
    <alternativeName>
        <fullName evidence="3">50S ribosomal protein L34</fullName>
    </alternativeName>
</protein>
<keyword id="KW-1185">Reference proteome</keyword>
<keyword id="KW-0687">Ribonucleoprotein</keyword>
<keyword id="KW-0689">Ribosomal protein</keyword>
<organism>
    <name type="scientific">Elusimicrobium minutum (strain Pei191)</name>
    <dbReference type="NCBI Taxonomy" id="445932"/>
    <lineage>
        <taxon>Bacteria</taxon>
        <taxon>Pseudomonadati</taxon>
        <taxon>Elusimicrobiota</taxon>
        <taxon>Elusimicrobia</taxon>
        <taxon>Elusimicrobiales</taxon>
        <taxon>Elusimicrobiaceae</taxon>
        <taxon>Elusimicrobium</taxon>
    </lineage>
</organism>
<gene>
    <name evidence="1" type="primary">rpmH</name>
    <name type="ordered locus">Emin_1266</name>
</gene>
<comment type="similarity">
    <text evidence="1">Belongs to the bacterial ribosomal protein bL34 family.</text>
</comment>